<protein>
    <recommendedName>
        <fullName evidence="1">Probable potassium transport system protein Kup 2</fullName>
    </recommendedName>
</protein>
<comment type="function">
    <text evidence="1">Transport of potassium into the cell. Likely operates as a K(+):H(+) symporter.</text>
</comment>
<comment type="catalytic activity">
    <reaction evidence="1">
        <text>K(+)(in) + H(+)(in) = K(+)(out) + H(+)(out)</text>
        <dbReference type="Rhea" id="RHEA:28490"/>
        <dbReference type="ChEBI" id="CHEBI:15378"/>
        <dbReference type="ChEBI" id="CHEBI:29103"/>
    </reaction>
    <physiologicalReaction direction="right-to-left" evidence="1">
        <dbReference type="Rhea" id="RHEA:28492"/>
    </physiologicalReaction>
</comment>
<comment type="subcellular location">
    <subcellularLocation>
        <location evidence="1">Cell inner membrane</location>
        <topology evidence="1">Multi-pass membrane protein</topology>
    </subcellularLocation>
</comment>
<comment type="similarity">
    <text evidence="1">Belongs to the HAK/KUP transporter (TC 2.A.72) family.</text>
</comment>
<feature type="chain" id="PRO_0000209049" description="Probable potassium transport system protein Kup 2">
    <location>
        <begin position="1"/>
        <end position="633"/>
    </location>
</feature>
<feature type="transmembrane region" description="Helical" evidence="1">
    <location>
        <begin position="18"/>
        <end position="38"/>
    </location>
</feature>
<feature type="transmembrane region" description="Helical" evidence="1">
    <location>
        <begin position="61"/>
        <end position="81"/>
    </location>
</feature>
<feature type="transmembrane region" description="Helical" evidence="1">
    <location>
        <begin position="107"/>
        <end position="127"/>
    </location>
</feature>
<feature type="transmembrane region" description="Helical" evidence="1">
    <location>
        <begin position="143"/>
        <end position="163"/>
    </location>
</feature>
<feature type="transmembrane region" description="Helical" evidence="1">
    <location>
        <begin position="173"/>
        <end position="193"/>
    </location>
</feature>
<feature type="transmembrane region" description="Helical" evidence="1">
    <location>
        <begin position="211"/>
        <end position="231"/>
    </location>
</feature>
<feature type="transmembrane region" description="Helical" evidence="1">
    <location>
        <begin position="255"/>
        <end position="275"/>
    </location>
</feature>
<feature type="transmembrane region" description="Helical" evidence="1">
    <location>
        <begin position="287"/>
        <end position="307"/>
    </location>
</feature>
<feature type="transmembrane region" description="Helical" evidence="1">
    <location>
        <begin position="345"/>
        <end position="365"/>
    </location>
</feature>
<feature type="transmembrane region" description="Helical" evidence="1">
    <location>
        <begin position="371"/>
        <end position="391"/>
    </location>
</feature>
<feature type="transmembrane region" description="Helical" evidence="1">
    <location>
        <begin position="402"/>
        <end position="422"/>
    </location>
</feature>
<feature type="transmembrane region" description="Helical" evidence="1">
    <location>
        <begin position="427"/>
        <end position="447"/>
    </location>
</feature>
<dbReference type="EMBL" id="AE006469">
    <property type="protein sequence ID" value="AAK65649.1"/>
    <property type="molecule type" value="Genomic_DNA"/>
</dbReference>
<dbReference type="PIR" id="G95385">
    <property type="entry name" value="G95385"/>
</dbReference>
<dbReference type="RefSeq" id="NP_436237.1">
    <property type="nucleotide sequence ID" value="NC_003037.1"/>
</dbReference>
<dbReference type="RefSeq" id="WP_010967951.1">
    <property type="nucleotide sequence ID" value="NC_003037.1"/>
</dbReference>
<dbReference type="EnsemblBacteria" id="AAK65649">
    <property type="protein sequence ID" value="AAK65649"/>
    <property type="gene ID" value="SMa1798"/>
</dbReference>
<dbReference type="KEGG" id="sme:SMa1798"/>
<dbReference type="PATRIC" id="fig|266834.11.peg.1026"/>
<dbReference type="HOGENOM" id="CLU_008142_4_2_5"/>
<dbReference type="OrthoDB" id="9805577at2"/>
<dbReference type="Proteomes" id="UP000001976">
    <property type="component" value="Plasmid pSymA"/>
</dbReference>
<dbReference type="GO" id="GO:0005886">
    <property type="term" value="C:plasma membrane"/>
    <property type="evidence" value="ECO:0007669"/>
    <property type="project" value="UniProtKB-SubCell"/>
</dbReference>
<dbReference type="GO" id="GO:0015079">
    <property type="term" value="F:potassium ion transmembrane transporter activity"/>
    <property type="evidence" value="ECO:0007669"/>
    <property type="project" value="UniProtKB-UniRule"/>
</dbReference>
<dbReference type="GO" id="GO:0015293">
    <property type="term" value="F:symporter activity"/>
    <property type="evidence" value="ECO:0007669"/>
    <property type="project" value="UniProtKB-UniRule"/>
</dbReference>
<dbReference type="HAMAP" id="MF_01522">
    <property type="entry name" value="Kup"/>
    <property type="match status" value="1"/>
</dbReference>
<dbReference type="InterPro" id="IPR003855">
    <property type="entry name" value="K+_transporter"/>
</dbReference>
<dbReference type="InterPro" id="IPR053952">
    <property type="entry name" value="K_trans_C"/>
</dbReference>
<dbReference type="InterPro" id="IPR053951">
    <property type="entry name" value="K_trans_N"/>
</dbReference>
<dbReference type="InterPro" id="IPR023051">
    <property type="entry name" value="Kup"/>
</dbReference>
<dbReference type="PANTHER" id="PTHR30540:SF79">
    <property type="entry name" value="LOW AFFINITY POTASSIUM TRANSPORT SYSTEM PROTEIN KUP"/>
    <property type="match status" value="1"/>
</dbReference>
<dbReference type="PANTHER" id="PTHR30540">
    <property type="entry name" value="OSMOTIC STRESS POTASSIUM TRANSPORTER"/>
    <property type="match status" value="1"/>
</dbReference>
<dbReference type="Pfam" id="PF02705">
    <property type="entry name" value="K_trans"/>
    <property type="match status" value="1"/>
</dbReference>
<dbReference type="Pfam" id="PF22776">
    <property type="entry name" value="K_trans_C"/>
    <property type="match status" value="1"/>
</dbReference>
<keyword id="KW-0997">Cell inner membrane</keyword>
<keyword id="KW-1003">Cell membrane</keyword>
<keyword id="KW-0406">Ion transport</keyword>
<keyword id="KW-0472">Membrane</keyword>
<keyword id="KW-0614">Plasmid</keyword>
<keyword id="KW-0630">Potassium</keyword>
<keyword id="KW-0633">Potassium transport</keyword>
<keyword id="KW-1185">Reference proteome</keyword>
<keyword id="KW-0769">Symport</keyword>
<keyword id="KW-0812">Transmembrane</keyword>
<keyword id="KW-1133">Transmembrane helix</keyword>
<keyword id="KW-0813">Transport</keyword>
<reference key="1">
    <citation type="journal article" date="2001" name="Proc. Natl. Acad. Sci. U.S.A.">
        <title>Nucleotide sequence and predicted functions of the entire Sinorhizobium meliloti pSymA megaplasmid.</title>
        <authorList>
            <person name="Barnett M.J."/>
            <person name="Fisher R.F."/>
            <person name="Jones T."/>
            <person name="Komp C."/>
            <person name="Abola A.P."/>
            <person name="Barloy-Hubler F."/>
            <person name="Bowser L."/>
            <person name="Capela D."/>
            <person name="Galibert F."/>
            <person name="Gouzy J."/>
            <person name="Gurjal M."/>
            <person name="Hong A."/>
            <person name="Huizar L."/>
            <person name="Hyman R.W."/>
            <person name="Kahn D."/>
            <person name="Kahn M.L."/>
            <person name="Kalman S."/>
            <person name="Keating D.H."/>
            <person name="Palm C."/>
            <person name="Peck M.C."/>
            <person name="Surzycki R."/>
            <person name="Wells D.H."/>
            <person name="Yeh K.-C."/>
            <person name="Davis R.W."/>
            <person name="Federspiel N.A."/>
            <person name="Long S.R."/>
        </authorList>
    </citation>
    <scope>NUCLEOTIDE SEQUENCE [LARGE SCALE GENOMIC DNA]</scope>
    <source>
        <strain>1021</strain>
    </source>
</reference>
<reference key="2">
    <citation type="journal article" date="2001" name="Science">
        <title>The composite genome of the legume symbiont Sinorhizobium meliloti.</title>
        <authorList>
            <person name="Galibert F."/>
            <person name="Finan T.M."/>
            <person name="Long S.R."/>
            <person name="Puehler A."/>
            <person name="Abola P."/>
            <person name="Ampe F."/>
            <person name="Barloy-Hubler F."/>
            <person name="Barnett M.J."/>
            <person name="Becker A."/>
            <person name="Boistard P."/>
            <person name="Bothe G."/>
            <person name="Boutry M."/>
            <person name="Bowser L."/>
            <person name="Buhrmester J."/>
            <person name="Cadieu E."/>
            <person name="Capela D."/>
            <person name="Chain P."/>
            <person name="Cowie A."/>
            <person name="Davis R.W."/>
            <person name="Dreano S."/>
            <person name="Federspiel N.A."/>
            <person name="Fisher R.F."/>
            <person name="Gloux S."/>
            <person name="Godrie T."/>
            <person name="Goffeau A."/>
            <person name="Golding B."/>
            <person name="Gouzy J."/>
            <person name="Gurjal M."/>
            <person name="Hernandez-Lucas I."/>
            <person name="Hong A."/>
            <person name="Huizar L."/>
            <person name="Hyman R.W."/>
            <person name="Jones T."/>
            <person name="Kahn D."/>
            <person name="Kahn M.L."/>
            <person name="Kalman S."/>
            <person name="Keating D.H."/>
            <person name="Kiss E."/>
            <person name="Komp C."/>
            <person name="Lelaure V."/>
            <person name="Masuy D."/>
            <person name="Palm C."/>
            <person name="Peck M.C."/>
            <person name="Pohl T.M."/>
            <person name="Portetelle D."/>
            <person name="Purnelle B."/>
            <person name="Ramsperger U."/>
            <person name="Surzycki R."/>
            <person name="Thebault P."/>
            <person name="Vandenbol M."/>
            <person name="Vorhoelter F.J."/>
            <person name="Weidner S."/>
            <person name="Wells D.H."/>
            <person name="Wong K."/>
            <person name="Yeh K.-C."/>
            <person name="Batut J."/>
        </authorList>
    </citation>
    <scope>NUCLEOTIDE SEQUENCE [LARGE SCALE GENOMIC DNA]</scope>
    <source>
        <strain>1021</strain>
    </source>
</reference>
<sequence length="633" mass="68757">MADSLDHAPAQANNLPQFLALTIGAIGVVYGDIGTSPLYAFREALRPFGPGGVGRDEVIGLVSLVLWTLTAIVTIKYVLFLLRADNDGEGGTLSLLALLLKKGTKYPVLMFFAGVLGAALFIGDAMITPALSVLSAVEGLKLVAPALHDYVLPISVVIILLLFAVQSRGTGAVSVFFGPITLVWFLMMAAAGVAHIGDDLAILSAFNPLNAIGFLWNAGLIGFIVLGAIFLTVTGAEALYADLGHFGRHSIQAAWFAVVFPALALNYLGQGALVLSHPDAISNPFFLMFPNWALLPMVILATAATIIASQSVITGAFSLIRQAIHLGFLPRFEICYTSETQTGQIYLPLVNTILLTGVLALMLMFGSSEALAPAYGVSITGAMVIDTILAFEFVRRQWGWPALTAIAVLLPLFNLELVFLGANLLKVHHGGYVPILIAGTLITMMWTWRKGVSVLREKTARQDIPLSQFMAIVERKSEHAPVQVPGTAIFLTATPDTTPAVLLHNIKHNHVLHQHNVIMTIKTARVPYVPEKDRYTITKLSDRFSLLELRFGFMDDQNVSRALARCRKEGFKFEIMSTSFYLGRRKLIADPQSGLPQWQDKLFIAMADSAIDPTEYFHLPANRVVELGEQVII</sequence>
<geneLocation type="plasmid">
    <name>pSymA</name>
    <name>megaplasmid 1</name>
</geneLocation>
<gene>
    <name evidence="1" type="primary">kup2</name>
    <name type="ordered locus">RA0991</name>
    <name type="ORF">SMa1798</name>
</gene>
<proteinExistence type="inferred from homology"/>
<organism>
    <name type="scientific">Rhizobium meliloti (strain 1021)</name>
    <name type="common">Ensifer meliloti</name>
    <name type="synonym">Sinorhizobium meliloti</name>
    <dbReference type="NCBI Taxonomy" id="266834"/>
    <lineage>
        <taxon>Bacteria</taxon>
        <taxon>Pseudomonadati</taxon>
        <taxon>Pseudomonadota</taxon>
        <taxon>Alphaproteobacteria</taxon>
        <taxon>Hyphomicrobiales</taxon>
        <taxon>Rhizobiaceae</taxon>
        <taxon>Sinorhizobium/Ensifer group</taxon>
        <taxon>Sinorhizobium</taxon>
    </lineage>
</organism>
<name>KUP2_RHIME</name>
<accession>Q92Y93</accession>
<evidence type="ECO:0000255" key="1">
    <source>
        <dbReference type="HAMAP-Rule" id="MF_01522"/>
    </source>
</evidence>